<keyword id="KW-0963">Cytoplasm</keyword>
<keyword id="KW-0620">Polyamine biosynthesis</keyword>
<keyword id="KW-0745">Spermidine biosynthesis</keyword>
<keyword id="KW-0808">Transferase</keyword>
<protein>
    <recommendedName>
        <fullName evidence="1">Polyamine aminopropyltransferase</fullName>
    </recommendedName>
    <alternativeName>
        <fullName evidence="1">Putrescine aminopropyltransferase</fullName>
        <shortName evidence="1">PAPT</shortName>
    </alternativeName>
    <alternativeName>
        <fullName evidence="1">Spermidine synthase</fullName>
        <shortName evidence="1">SPDS</shortName>
        <shortName evidence="1">SPDSY</shortName>
        <ecNumber evidence="1">2.5.1.16</ecNumber>
    </alternativeName>
</protein>
<gene>
    <name evidence="1" type="primary">speE</name>
    <name type="ordered locus">SPA0169</name>
</gene>
<accession>Q5PDA0</accession>
<organism>
    <name type="scientific">Salmonella paratyphi A (strain ATCC 9150 / SARB42)</name>
    <dbReference type="NCBI Taxonomy" id="295319"/>
    <lineage>
        <taxon>Bacteria</taxon>
        <taxon>Pseudomonadati</taxon>
        <taxon>Pseudomonadota</taxon>
        <taxon>Gammaproteobacteria</taxon>
        <taxon>Enterobacterales</taxon>
        <taxon>Enterobacteriaceae</taxon>
        <taxon>Salmonella</taxon>
    </lineage>
</organism>
<comment type="function">
    <text evidence="1">Catalyzes the irreversible transfer of a propylamine group from the amino donor S-adenosylmethioninamine (decarboxy-AdoMet) to putrescine (1,4-diaminobutane) to yield spermidine.</text>
</comment>
<comment type="catalytic activity">
    <reaction evidence="1">
        <text>S-adenosyl 3-(methylsulfanyl)propylamine + putrescine = S-methyl-5'-thioadenosine + spermidine + H(+)</text>
        <dbReference type="Rhea" id="RHEA:12721"/>
        <dbReference type="ChEBI" id="CHEBI:15378"/>
        <dbReference type="ChEBI" id="CHEBI:17509"/>
        <dbReference type="ChEBI" id="CHEBI:57443"/>
        <dbReference type="ChEBI" id="CHEBI:57834"/>
        <dbReference type="ChEBI" id="CHEBI:326268"/>
        <dbReference type="EC" id="2.5.1.16"/>
    </reaction>
</comment>
<comment type="pathway">
    <text evidence="1">Amine and polyamine biosynthesis; spermidine biosynthesis; spermidine from putrescine: step 1/1.</text>
</comment>
<comment type="subunit">
    <text evidence="1">Homodimer or homotetramer.</text>
</comment>
<comment type="subcellular location">
    <subcellularLocation>
        <location evidence="1">Cytoplasm</location>
    </subcellularLocation>
</comment>
<comment type="similarity">
    <text evidence="1">Belongs to the spermidine/spermine synthase family.</text>
</comment>
<sequence>MAENTMWHETLHDQFGQYFAVDNVLYHEKTDHQDLIIFENAAFGRVMALDGVVQTTERDEFIYHEMMTHVPLLAHGHAKHVLIIGGGDGAMLREVTRHKNVETITMVEIDAGVVSFCRQYLPNHNAGSYDDPRFTLVIDDGVNFVNQTHQTFDVIISDCTDPIGPGESLFTSAFYEGCKRCLNPGGIFVAQNGVCFLQQDEAIDSHRKLSHYFSDVGFYQAAIPTYYGGIMTFAWATDNDALRHLSSEIIQARFHAAGLKCRYYNPAIHAAAFALPQYLHDALSAQ</sequence>
<dbReference type="EC" id="2.5.1.16" evidence="1"/>
<dbReference type="EMBL" id="CP000026">
    <property type="protein sequence ID" value="AAV76202.1"/>
    <property type="molecule type" value="Genomic_DNA"/>
</dbReference>
<dbReference type="RefSeq" id="WP_000829966.1">
    <property type="nucleotide sequence ID" value="NC_006511.1"/>
</dbReference>
<dbReference type="SMR" id="Q5PDA0"/>
<dbReference type="KEGG" id="spt:SPA0169"/>
<dbReference type="HOGENOM" id="CLU_048199_0_0_6"/>
<dbReference type="UniPathway" id="UPA00248">
    <property type="reaction ID" value="UER00314"/>
</dbReference>
<dbReference type="Proteomes" id="UP000008185">
    <property type="component" value="Chromosome"/>
</dbReference>
<dbReference type="GO" id="GO:0005829">
    <property type="term" value="C:cytosol"/>
    <property type="evidence" value="ECO:0007669"/>
    <property type="project" value="TreeGrafter"/>
</dbReference>
<dbReference type="GO" id="GO:0004766">
    <property type="term" value="F:spermidine synthase activity"/>
    <property type="evidence" value="ECO:0007669"/>
    <property type="project" value="UniProtKB-UniRule"/>
</dbReference>
<dbReference type="GO" id="GO:0008295">
    <property type="term" value="P:spermidine biosynthetic process"/>
    <property type="evidence" value="ECO:0007669"/>
    <property type="project" value="UniProtKB-UniRule"/>
</dbReference>
<dbReference type="CDD" id="cd02440">
    <property type="entry name" value="AdoMet_MTases"/>
    <property type="match status" value="1"/>
</dbReference>
<dbReference type="FunFam" id="2.30.140.10:FF:000002">
    <property type="entry name" value="Polyamine aminopropyltransferase"/>
    <property type="match status" value="1"/>
</dbReference>
<dbReference type="FunFam" id="3.40.50.150:FF:000026">
    <property type="entry name" value="Polyamine aminopropyltransferase"/>
    <property type="match status" value="1"/>
</dbReference>
<dbReference type="Gene3D" id="2.30.140.10">
    <property type="entry name" value="Spermidine synthase, tetramerisation domain"/>
    <property type="match status" value="1"/>
</dbReference>
<dbReference type="Gene3D" id="3.40.50.150">
    <property type="entry name" value="Vaccinia Virus protein VP39"/>
    <property type="match status" value="1"/>
</dbReference>
<dbReference type="HAMAP" id="MF_00198">
    <property type="entry name" value="Spermidine_synth"/>
    <property type="match status" value="1"/>
</dbReference>
<dbReference type="InterPro" id="IPR030374">
    <property type="entry name" value="PABS"/>
</dbReference>
<dbReference type="InterPro" id="IPR030373">
    <property type="entry name" value="PABS_CS"/>
</dbReference>
<dbReference type="InterPro" id="IPR029063">
    <property type="entry name" value="SAM-dependent_MTases_sf"/>
</dbReference>
<dbReference type="InterPro" id="IPR001045">
    <property type="entry name" value="Spermi_synthase"/>
</dbReference>
<dbReference type="InterPro" id="IPR035246">
    <property type="entry name" value="Spermidine_synt_N"/>
</dbReference>
<dbReference type="InterPro" id="IPR037163">
    <property type="entry name" value="Spermidine_synt_N_sf"/>
</dbReference>
<dbReference type="NCBIfam" id="NF037959">
    <property type="entry name" value="MFS_SpdSyn"/>
    <property type="match status" value="1"/>
</dbReference>
<dbReference type="NCBIfam" id="NF002010">
    <property type="entry name" value="PRK00811.1"/>
    <property type="match status" value="1"/>
</dbReference>
<dbReference type="NCBIfam" id="TIGR00417">
    <property type="entry name" value="speE"/>
    <property type="match status" value="1"/>
</dbReference>
<dbReference type="PANTHER" id="PTHR11558:SF11">
    <property type="entry name" value="SPERMIDINE SYNTHASE"/>
    <property type="match status" value="1"/>
</dbReference>
<dbReference type="PANTHER" id="PTHR11558">
    <property type="entry name" value="SPERMIDINE/SPERMINE SYNTHASE"/>
    <property type="match status" value="1"/>
</dbReference>
<dbReference type="Pfam" id="PF17284">
    <property type="entry name" value="Spermine_synt_N"/>
    <property type="match status" value="1"/>
</dbReference>
<dbReference type="Pfam" id="PF01564">
    <property type="entry name" value="Spermine_synth"/>
    <property type="match status" value="1"/>
</dbReference>
<dbReference type="SUPFAM" id="SSF53335">
    <property type="entry name" value="S-adenosyl-L-methionine-dependent methyltransferases"/>
    <property type="match status" value="1"/>
</dbReference>
<dbReference type="PROSITE" id="PS01330">
    <property type="entry name" value="PABS_1"/>
    <property type="match status" value="1"/>
</dbReference>
<dbReference type="PROSITE" id="PS51006">
    <property type="entry name" value="PABS_2"/>
    <property type="match status" value="1"/>
</dbReference>
<proteinExistence type="inferred from homology"/>
<reference key="1">
    <citation type="journal article" date="2004" name="Nat. Genet.">
        <title>Comparison of genome degradation in Paratyphi A and Typhi, human-restricted serovars of Salmonella enterica that cause typhoid.</title>
        <authorList>
            <person name="McClelland M."/>
            <person name="Sanderson K.E."/>
            <person name="Clifton S.W."/>
            <person name="Latreille P."/>
            <person name="Porwollik S."/>
            <person name="Sabo A."/>
            <person name="Meyer R."/>
            <person name="Bieri T."/>
            <person name="Ozersky P."/>
            <person name="McLellan M."/>
            <person name="Harkins C.R."/>
            <person name="Wang C."/>
            <person name="Nguyen C."/>
            <person name="Berghoff A."/>
            <person name="Elliott G."/>
            <person name="Kohlberg S."/>
            <person name="Strong C."/>
            <person name="Du F."/>
            <person name="Carter J."/>
            <person name="Kremizki C."/>
            <person name="Layman D."/>
            <person name="Leonard S."/>
            <person name="Sun H."/>
            <person name="Fulton L."/>
            <person name="Nash W."/>
            <person name="Miner T."/>
            <person name="Minx P."/>
            <person name="Delehaunty K."/>
            <person name="Fronick C."/>
            <person name="Magrini V."/>
            <person name="Nhan M."/>
            <person name="Warren W."/>
            <person name="Florea L."/>
            <person name="Spieth J."/>
            <person name="Wilson R.K."/>
        </authorList>
    </citation>
    <scope>NUCLEOTIDE SEQUENCE [LARGE SCALE GENOMIC DNA]</scope>
    <source>
        <strain>ATCC 9150 / SARB42</strain>
    </source>
</reference>
<feature type="chain" id="PRO_1000012016" description="Polyamine aminopropyltransferase">
    <location>
        <begin position="1"/>
        <end position="286"/>
    </location>
</feature>
<feature type="domain" description="PABS" evidence="1">
    <location>
        <begin position="5"/>
        <end position="238"/>
    </location>
</feature>
<feature type="active site" description="Proton acceptor" evidence="1">
    <location>
        <position position="158"/>
    </location>
</feature>
<feature type="binding site" evidence="1">
    <location>
        <position position="33"/>
    </location>
    <ligand>
        <name>S-methyl-5'-thioadenosine</name>
        <dbReference type="ChEBI" id="CHEBI:17509"/>
    </ligand>
</feature>
<feature type="binding site" evidence="1">
    <location>
        <position position="64"/>
    </location>
    <ligand>
        <name>spermidine</name>
        <dbReference type="ChEBI" id="CHEBI:57834"/>
    </ligand>
</feature>
<feature type="binding site" evidence="1">
    <location>
        <position position="88"/>
    </location>
    <ligand>
        <name>spermidine</name>
        <dbReference type="ChEBI" id="CHEBI:57834"/>
    </ligand>
</feature>
<feature type="binding site" evidence="1">
    <location>
        <position position="108"/>
    </location>
    <ligand>
        <name>S-methyl-5'-thioadenosine</name>
        <dbReference type="ChEBI" id="CHEBI:17509"/>
    </ligand>
</feature>
<feature type="binding site" evidence="1">
    <location>
        <begin position="140"/>
        <end position="141"/>
    </location>
    <ligand>
        <name>S-methyl-5'-thioadenosine</name>
        <dbReference type="ChEBI" id="CHEBI:17509"/>
    </ligand>
</feature>
<feature type="binding site" evidence="1">
    <location>
        <begin position="158"/>
        <end position="161"/>
    </location>
    <ligand>
        <name>spermidine</name>
        <dbReference type="ChEBI" id="CHEBI:57834"/>
    </ligand>
</feature>
<feature type="binding site" evidence="1">
    <location>
        <position position="165"/>
    </location>
    <ligand>
        <name>S-methyl-5'-thioadenosine</name>
        <dbReference type="ChEBI" id="CHEBI:17509"/>
    </ligand>
</feature>
<name>SPEE_SALPA</name>
<evidence type="ECO:0000255" key="1">
    <source>
        <dbReference type="HAMAP-Rule" id="MF_00198"/>
    </source>
</evidence>